<evidence type="ECO:0000255" key="1"/>
<evidence type="ECO:0000255" key="2">
    <source>
        <dbReference type="PROSITE-ProRule" id="PRU00521"/>
    </source>
</evidence>
<evidence type="ECO:0000305" key="3"/>
<keyword id="KW-1003">Cell membrane</keyword>
<keyword id="KW-1015">Disulfide bond</keyword>
<keyword id="KW-0297">G-protein coupled receptor</keyword>
<keyword id="KW-0325">Glycoprotein</keyword>
<keyword id="KW-0472">Membrane</keyword>
<keyword id="KW-0552">Olfaction</keyword>
<keyword id="KW-0675">Receptor</keyword>
<keyword id="KW-1185">Reference proteome</keyword>
<keyword id="KW-0716">Sensory transduction</keyword>
<keyword id="KW-0807">Transducer</keyword>
<keyword id="KW-0812">Transmembrane</keyword>
<keyword id="KW-1133">Transmembrane helix</keyword>
<dbReference type="EMBL" id="AB065953">
    <property type="protein sequence ID" value="BAC06166.1"/>
    <property type="molecule type" value="Genomic_DNA"/>
</dbReference>
<dbReference type="EMBL" id="AL450303">
    <property type="status" value="NOT_ANNOTATED_CDS"/>
    <property type="molecule type" value="Genomic_DNA"/>
</dbReference>
<dbReference type="EMBL" id="AF399617">
    <property type="protein sequence ID" value="AAK95102.1"/>
    <property type="molecule type" value="Genomic_DNA"/>
</dbReference>
<dbReference type="EMBL" id="X89666">
    <property type="protein sequence ID" value="CAA61813.1"/>
    <property type="molecule type" value="mRNA"/>
</dbReference>
<dbReference type="EMBL" id="X64992">
    <property type="status" value="NOT_ANNOTATED_CDS"/>
    <property type="molecule type" value="mRNA"/>
</dbReference>
<dbReference type="EMBL" id="BK004483">
    <property type="protein sequence ID" value="DAA04881.1"/>
    <property type="molecule type" value="Genomic_DNA"/>
</dbReference>
<dbReference type="CCDS" id="CCDS31108.1"/>
<dbReference type="PIR" id="S58011">
    <property type="entry name" value="S58011"/>
</dbReference>
<dbReference type="RefSeq" id="NP_059974.1">
    <property type="nucleotide sequence ID" value="NM_017504.2"/>
</dbReference>
<dbReference type="SMR" id="Q96R27"/>
<dbReference type="FunCoup" id="Q96R27">
    <property type="interactions" value="450"/>
</dbReference>
<dbReference type="STRING" id="9606.ENSP00000492992"/>
<dbReference type="GlyCosmos" id="Q96R27">
    <property type="glycosylation" value="1 site, No reported glycans"/>
</dbReference>
<dbReference type="GlyGen" id="Q96R27">
    <property type="glycosylation" value="2 sites, 1 O-linked glycan (1 site)"/>
</dbReference>
<dbReference type="iPTMnet" id="Q96R27"/>
<dbReference type="PhosphoSitePlus" id="Q96R27"/>
<dbReference type="BioMuta" id="OR2M4"/>
<dbReference type="DMDM" id="55977872"/>
<dbReference type="MassIVE" id="Q96R27"/>
<dbReference type="PaxDb" id="9606-ENSP00000306688"/>
<dbReference type="PeptideAtlas" id="Q96R27"/>
<dbReference type="Antibodypedia" id="64187">
    <property type="antibodies" value="29 antibodies from 14 providers"/>
</dbReference>
<dbReference type="DNASU" id="26245"/>
<dbReference type="Ensembl" id="ENST00000641868.1">
    <property type="protein sequence ID" value="ENSP00000492992.1"/>
    <property type="gene ID" value="ENSG00000171180.3"/>
</dbReference>
<dbReference type="GeneID" id="26245"/>
<dbReference type="KEGG" id="hsa:26245"/>
<dbReference type="MANE-Select" id="ENST00000641868.1">
    <property type="protein sequence ID" value="ENSP00000492992.1"/>
    <property type="RefSeq nucleotide sequence ID" value="NM_017504.2"/>
    <property type="RefSeq protein sequence ID" value="NP_059974.1"/>
</dbReference>
<dbReference type="UCSC" id="uc010pzh.2">
    <property type="organism name" value="human"/>
</dbReference>
<dbReference type="AGR" id="HGNC:8270"/>
<dbReference type="CTD" id="26245"/>
<dbReference type="DisGeNET" id="26245"/>
<dbReference type="GeneCards" id="OR2M4"/>
<dbReference type="HGNC" id="HGNC:8270">
    <property type="gene designation" value="OR2M4"/>
</dbReference>
<dbReference type="HPA" id="ENSG00000171180">
    <property type="expression patterns" value="Not detected"/>
</dbReference>
<dbReference type="neXtProt" id="NX_Q96R27"/>
<dbReference type="OpenTargets" id="ENSG00000171180"/>
<dbReference type="PharmGKB" id="PA32194"/>
<dbReference type="VEuPathDB" id="HostDB:ENSG00000171180"/>
<dbReference type="eggNOG" id="ENOG502R1AD">
    <property type="taxonomic scope" value="Eukaryota"/>
</dbReference>
<dbReference type="GeneTree" id="ENSGT01130000278260"/>
<dbReference type="HOGENOM" id="CLU_012526_1_2_1"/>
<dbReference type="InParanoid" id="Q96R27"/>
<dbReference type="OMA" id="LQAVIHM"/>
<dbReference type="OrthoDB" id="9831471at2759"/>
<dbReference type="PAN-GO" id="Q96R27">
    <property type="GO annotations" value="0 GO annotations based on evolutionary models"/>
</dbReference>
<dbReference type="PhylomeDB" id="Q96R27"/>
<dbReference type="TreeFam" id="TF337295"/>
<dbReference type="PathwayCommons" id="Q96R27"/>
<dbReference type="Reactome" id="R-HSA-9752946">
    <property type="pathway name" value="Expression and translocation of olfactory receptors"/>
</dbReference>
<dbReference type="BioGRID-ORCS" id="26245">
    <property type="hits" value="10 hits in 750 CRISPR screens"/>
</dbReference>
<dbReference type="ChiTaRS" id="OR2M4">
    <property type="organism name" value="human"/>
</dbReference>
<dbReference type="GeneWiki" id="OR2M4"/>
<dbReference type="GenomeRNAi" id="26245"/>
<dbReference type="Pharos" id="Q96R27">
    <property type="development level" value="Tdark"/>
</dbReference>
<dbReference type="PRO" id="PR:Q96R27"/>
<dbReference type="Proteomes" id="UP000005640">
    <property type="component" value="Chromosome 1"/>
</dbReference>
<dbReference type="RNAct" id="Q96R27">
    <property type="molecule type" value="protein"/>
</dbReference>
<dbReference type="Bgee" id="ENSG00000171180">
    <property type="expression patterns" value="Expressed in prefrontal cortex and 2 other cell types or tissues"/>
</dbReference>
<dbReference type="ExpressionAtlas" id="Q96R27">
    <property type="expression patterns" value="baseline and differential"/>
</dbReference>
<dbReference type="GO" id="GO:0016020">
    <property type="term" value="C:membrane"/>
    <property type="evidence" value="ECO:0000303"/>
    <property type="project" value="UniProtKB"/>
</dbReference>
<dbReference type="GO" id="GO:0005886">
    <property type="term" value="C:plasma membrane"/>
    <property type="evidence" value="ECO:0000318"/>
    <property type="project" value="GO_Central"/>
</dbReference>
<dbReference type="GO" id="GO:0004930">
    <property type="term" value="F:G protein-coupled receptor activity"/>
    <property type="evidence" value="ECO:0007669"/>
    <property type="project" value="UniProtKB-KW"/>
</dbReference>
<dbReference type="GO" id="GO:0004984">
    <property type="term" value="F:olfactory receptor activity"/>
    <property type="evidence" value="ECO:0000318"/>
    <property type="project" value="GO_Central"/>
</dbReference>
<dbReference type="GO" id="GO:0050911">
    <property type="term" value="P:detection of chemical stimulus involved in sensory perception of smell"/>
    <property type="evidence" value="ECO:0000318"/>
    <property type="project" value="GO_Central"/>
</dbReference>
<dbReference type="GO" id="GO:0007608">
    <property type="term" value="P:sensory perception of smell"/>
    <property type="evidence" value="ECO:0000303"/>
    <property type="project" value="UniProtKB"/>
</dbReference>
<dbReference type="CDD" id="cd15421">
    <property type="entry name" value="7tmA_OR2T-like"/>
    <property type="match status" value="1"/>
</dbReference>
<dbReference type="FunFam" id="1.20.1070.10:FF:000008">
    <property type="entry name" value="Olfactory receptor"/>
    <property type="match status" value="1"/>
</dbReference>
<dbReference type="Gene3D" id="1.20.1070.10">
    <property type="entry name" value="Rhodopsin 7-helix transmembrane proteins"/>
    <property type="match status" value="1"/>
</dbReference>
<dbReference type="InterPro" id="IPR000276">
    <property type="entry name" value="GPCR_Rhodpsn"/>
</dbReference>
<dbReference type="InterPro" id="IPR017452">
    <property type="entry name" value="GPCR_Rhodpsn_7TM"/>
</dbReference>
<dbReference type="InterPro" id="IPR000725">
    <property type="entry name" value="Olfact_rcpt"/>
</dbReference>
<dbReference type="PANTHER" id="PTHR26453">
    <property type="entry name" value="OLFACTORY RECEPTOR"/>
    <property type="match status" value="1"/>
</dbReference>
<dbReference type="Pfam" id="PF13853">
    <property type="entry name" value="7tm_4"/>
    <property type="match status" value="1"/>
</dbReference>
<dbReference type="PRINTS" id="PR00237">
    <property type="entry name" value="GPCRRHODOPSN"/>
</dbReference>
<dbReference type="PRINTS" id="PR00245">
    <property type="entry name" value="OLFACTORYR"/>
</dbReference>
<dbReference type="SMART" id="SM01381">
    <property type="entry name" value="7TM_GPCR_Srsx"/>
    <property type="match status" value="1"/>
</dbReference>
<dbReference type="SUPFAM" id="SSF81321">
    <property type="entry name" value="Family A G protein-coupled receptor-like"/>
    <property type="match status" value="1"/>
</dbReference>
<dbReference type="PROSITE" id="PS00237">
    <property type="entry name" value="G_PROTEIN_RECEP_F1_1"/>
    <property type="match status" value="1"/>
</dbReference>
<dbReference type="PROSITE" id="PS50262">
    <property type="entry name" value="G_PROTEIN_RECEP_F1_2"/>
    <property type="match status" value="1"/>
</dbReference>
<accession>Q96R27</accession>
<accession>Q15611</accession>
<accession>Q8NG82</accession>
<gene>
    <name type="primary">OR2M4</name>
</gene>
<sequence length="311" mass="35071">MVWENQTFNSIFILLGIFNHSPTHTFLFSLVLGIFSLALMENISMVLLIYIEKQLHTPMYFLLSQLSLMDLMLICTTLPKMIFSYLSGKKSISLAGCGTQIFFYVSLLGAECFLLAVMAYDRYVAICHPLQYTILMNPKLCVFMTVASWTLGSLDGIIVLAAVLSFSYCSSLEIHHFFCDVAALLPLSCTETSAFERLLVICCVVMLIFPVSVIILSYSHVLRAVIHMGSGESRRKAFTTCSSHLSVVGLYYGAAMFMYMRPASKHTPDQDKMVSAFYTILTPMLNPLIYSLRNKEVFRALQKVLKKRKLI</sequence>
<name>OR2M4_HUMAN</name>
<comment type="function">
    <text evidence="3">Odorant receptor.</text>
</comment>
<comment type="subcellular location">
    <subcellularLocation>
        <location>Cell membrane</location>
        <topology>Multi-pass membrane protein</topology>
    </subcellularLocation>
</comment>
<comment type="similarity">
    <text evidence="2">Belongs to the G-protein coupled receptor 1 family.</text>
</comment>
<comment type="online information" name="Human Olfactory Receptor Data Exploratorium (HORDE)">
    <link uri="https://genome.weizmann.ac.il/horde/card/index/symbol:OR2M4"/>
</comment>
<protein>
    <recommendedName>
        <fullName>Olfactory receptor 2M4</fullName>
    </recommendedName>
    <alternativeName>
        <fullName>HTPCRX18</fullName>
    </alternativeName>
    <alternativeName>
        <fullName>OST710</fullName>
    </alternativeName>
    <alternativeName>
        <fullName>Olfactory receptor OR1-55</fullName>
    </alternativeName>
    <alternativeName>
        <fullName>Olfactory receptor TPCR100</fullName>
    </alternativeName>
</protein>
<proteinExistence type="evidence at transcript level"/>
<feature type="chain" id="PRO_0000150493" description="Olfactory receptor 2M4">
    <location>
        <begin position="1"/>
        <end position="311"/>
    </location>
</feature>
<feature type="topological domain" description="Extracellular" evidence="1">
    <location>
        <begin position="1"/>
        <end position="25"/>
    </location>
</feature>
<feature type="transmembrane region" description="Helical; Name=1" evidence="1">
    <location>
        <begin position="26"/>
        <end position="49"/>
    </location>
</feature>
<feature type="topological domain" description="Cytoplasmic" evidence="1">
    <location>
        <begin position="50"/>
        <end position="57"/>
    </location>
</feature>
<feature type="transmembrane region" description="Helical; Name=2" evidence="1">
    <location>
        <begin position="58"/>
        <end position="79"/>
    </location>
</feature>
<feature type="topological domain" description="Extracellular" evidence="1">
    <location>
        <begin position="80"/>
        <end position="100"/>
    </location>
</feature>
<feature type="transmembrane region" description="Helical; Name=3" evidence="1">
    <location>
        <begin position="101"/>
        <end position="120"/>
    </location>
</feature>
<feature type="topological domain" description="Cytoplasmic" evidence="1">
    <location>
        <begin position="121"/>
        <end position="139"/>
    </location>
</feature>
<feature type="transmembrane region" description="Helical; Name=4" evidence="1">
    <location>
        <begin position="140"/>
        <end position="158"/>
    </location>
</feature>
<feature type="topological domain" description="Extracellular" evidence="1">
    <location>
        <begin position="159"/>
        <end position="195"/>
    </location>
</feature>
<feature type="transmembrane region" description="Helical; Name=5" evidence="1">
    <location>
        <begin position="196"/>
        <end position="219"/>
    </location>
</feature>
<feature type="topological domain" description="Cytoplasmic" evidence="1">
    <location>
        <begin position="220"/>
        <end position="236"/>
    </location>
</feature>
<feature type="transmembrane region" description="Helical; Name=6" evidence="1">
    <location>
        <begin position="237"/>
        <end position="259"/>
    </location>
</feature>
<feature type="topological domain" description="Extracellular" evidence="1">
    <location>
        <begin position="260"/>
        <end position="272"/>
    </location>
</feature>
<feature type="transmembrane region" description="Helical; Name=7" evidence="1">
    <location>
        <begin position="273"/>
        <end position="292"/>
    </location>
</feature>
<feature type="topological domain" description="Cytoplasmic" evidence="1">
    <location>
        <begin position="293"/>
        <end position="311"/>
    </location>
</feature>
<feature type="glycosylation site" description="N-linked (GlcNAc...) asparagine" evidence="1">
    <location>
        <position position="5"/>
    </location>
</feature>
<feature type="disulfide bond" evidence="2">
    <location>
        <begin position="97"/>
        <end position="189"/>
    </location>
</feature>
<feature type="sequence conflict" description="In Ref. 3, 4 and 5." evidence="3" ref="3 4 5">
    <original>K</original>
    <variation>E</variation>
    <location>
        <position position="139"/>
    </location>
</feature>
<feature type="sequence conflict" description="In Ref. 3 and 4." evidence="3" ref="3 4">
    <original>L</original>
    <variation>P</variation>
    <location>
        <position position="245"/>
    </location>
</feature>
<feature type="sequence conflict" description="In Ref. 3 and 4." evidence="3" ref="3 4">
    <original>I</original>
    <variation>N</variation>
    <location>
        <position position="280"/>
    </location>
</feature>
<feature type="sequence conflict" description="In Ref. 4." evidence="3" ref="4">
    <original>LT</original>
    <variation>SH</variation>
    <location>
        <begin position="281"/>
        <end position="282"/>
    </location>
</feature>
<organism>
    <name type="scientific">Homo sapiens</name>
    <name type="common">Human</name>
    <dbReference type="NCBI Taxonomy" id="9606"/>
    <lineage>
        <taxon>Eukaryota</taxon>
        <taxon>Metazoa</taxon>
        <taxon>Chordata</taxon>
        <taxon>Craniata</taxon>
        <taxon>Vertebrata</taxon>
        <taxon>Euteleostomi</taxon>
        <taxon>Mammalia</taxon>
        <taxon>Eutheria</taxon>
        <taxon>Euarchontoglires</taxon>
        <taxon>Primates</taxon>
        <taxon>Haplorrhini</taxon>
        <taxon>Catarrhini</taxon>
        <taxon>Hominidae</taxon>
        <taxon>Homo</taxon>
    </lineage>
</organism>
<reference key="1">
    <citation type="submission" date="2001-07" db="EMBL/GenBank/DDBJ databases">
        <title>Genome-wide discovery and analysis of human seven transmembrane helix receptor genes.</title>
        <authorList>
            <person name="Suwa M."/>
            <person name="Sato T."/>
            <person name="Okouchi I."/>
            <person name="Arita M."/>
            <person name="Futami K."/>
            <person name="Matsumoto S."/>
            <person name="Tsutsumi S."/>
            <person name="Aburatani H."/>
            <person name="Asai K."/>
            <person name="Akiyama Y."/>
        </authorList>
    </citation>
    <scope>NUCLEOTIDE SEQUENCE [GENOMIC DNA]</scope>
</reference>
<reference key="2">
    <citation type="journal article" date="2006" name="Nature">
        <title>The DNA sequence and biological annotation of human chromosome 1.</title>
        <authorList>
            <person name="Gregory S.G."/>
            <person name="Barlow K.F."/>
            <person name="McLay K.E."/>
            <person name="Kaul R."/>
            <person name="Swarbreck D."/>
            <person name="Dunham A."/>
            <person name="Scott C.E."/>
            <person name="Howe K.L."/>
            <person name="Woodfine K."/>
            <person name="Spencer C.C.A."/>
            <person name="Jones M.C."/>
            <person name="Gillson C."/>
            <person name="Searle S."/>
            <person name="Zhou Y."/>
            <person name="Kokocinski F."/>
            <person name="McDonald L."/>
            <person name="Evans R."/>
            <person name="Phillips K."/>
            <person name="Atkinson A."/>
            <person name="Cooper R."/>
            <person name="Jones C."/>
            <person name="Hall R.E."/>
            <person name="Andrews T.D."/>
            <person name="Lloyd C."/>
            <person name="Ainscough R."/>
            <person name="Almeida J.P."/>
            <person name="Ambrose K.D."/>
            <person name="Anderson F."/>
            <person name="Andrew R.W."/>
            <person name="Ashwell R.I.S."/>
            <person name="Aubin K."/>
            <person name="Babbage A.K."/>
            <person name="Bagguley C.L."/>
            <person name="Bailey J."/>
            <person name="Beasley H."/>
            <person name="Bethel G."/>
            <person name="Bird C.P."/>
            <person name="Bray-Allen S."/>
            <person name="Brown J.Y."/>
            <person name="Brown A.J."/>
            <person name="Buckley D."/>
            <person name="Burton J."/>
            <person name="Bye J."/>
            <person name="Carder C."/>
            <person name="Chapman J.C."/>
            <person name="Clark S.Y."/>
            <person name="Clarke G."/>
            <person name="Clee C."/>
            <person name="Cobley V."/>
            <person name="Collier R.E."/>
            <person name="Corby N."/>
            <person name="Coville G.J."/>
            <person name="Davies J."/>
            <person name="Deadman R."/>
            <person name="Dunn M."/>
            <person name="Earthrowl M."/>
            <person name="Ellington A.G."/>
            <person name="Errington H."/>
            <person name="Frankish A."/>
            <person name="Frankland J."/>
            <person name="French L."/>
            <person name="Garner P."/>
            <person name="Garnett J."/>
            <person name="Gay L."/>
            <person name="Ghori M.R.J."/>
            <person name="Gibson R."/>
            <person name="Gilby L.M."/>
            <person name="Gillett W."/>
            <person name="Glithero R.J."/>
            <person name="Grafham D.V."/>
            <person name="Griffiths C."/>
            <person name="Griffiths-Jones S."/>
            <person name="Grocock R."/>
            <person name="Hammond S."/>
            <person name="Harrison E.S.I."/>
            <person name="Hart E."/>
            <person name="Haugen E."/>
            <person name="Heath P.D."/>
            <person name="Holmes S."/>
            <person name="Holt K."/>
            <person name="Howden P.J."/>
            <person name="Hunt A.R."/>
            <person name="Hunt S.E."/>
            <person name="Hunter G."/>
            <person name="Isherwood J."/>
            <person name="James R."/>
            <person name="Johnson C."/>
            <person name="Johnson D."/>
            <person name="Joy A."/>
            <person name="Kay M."/>
            <person name="Kershaw J.K."/>
            <person name="Kibukawa M."/>
            <person name="Kimberley A.M."/>
            <person name="King A."/>
            <person name="Knights A.J."/>
            <person name="Lad H."/>
            <person name="Laird G."/>
            <person name="Lawlor S."/>
            <person name="Leongamornlert D.A."/>
            <person name="Lloyd D.M."/>
            <person name="Loveland J."/>
            <person name="Lovell J."/>
            <person name="Lush M.J."/>
            <person name="Lyne R."/>
            <person name="Martin S."/>
            <person name="Mashreghi-Mohammadi M."/>
            <person name="Matthews L."/>
            <person name="Matthews N.S.W."/>
            <person name="McLaren S."/>
            <person name="Milne S."/>
            <person name="Mistry S."/>
            <person name="Moore M.J.F."/>
            <person name="Nickerson T."/>
            <person name="O'Dell C.N."/>
            <person name="Oliver K."/>
            <person name="Palmeiri A."/>
            <person name="Palmer S.A."/>
            <person name="Parker A."/>
            <person name="Patel D."/>
            <person name="Pearce A.V."/>
            <person name="Peck A.I."/>
            <person name="Pelan S."/>
            <person name="Phelps K."/>
            <person name="Phillimore B.J."/>
            <person name="Plumb R."/>
            <person name="Rajan J."/>
            <person name="Raymond C."/>
            <person name="Rouse G."/>
            <person name="Saenphimmachak C."/>
            <person name="Sehra H.K."/>
            <person name="Sheridan E."/>
            <person name="Shownkeen R."/>
            <person name="Sims S."/>
            <person name="Skuce C.D."/>
            <person name="Smith M."/>
            <person name="Steward C."/>
            <person name="Subramanian S."/>
            <person name="Sycamore N."/>
            <person name="Tracey A."/>
            <person name="Tromans A."/>
            <person name="Van Helmond Z."/>
            <person name="Wall M."/>
            <person name="Wallis J.M."/>
            <person name="White S."/>
            <person name="Whitehead S.L."/>
            <person name="Wilkinson J.E."/>
            <person name="Willey D.L."/>
            <person name="Williams H."/>
            <person name="Wilming L."/>
            <person name="Wray P.W."/>
            <person name="Wu Z."/>
            <person name="Coulson A."/>
            <person name="Vaudin M."/>
            <person name="Sulston J.E."/>
            <person name="Durbin R.M."/>
            <person name="Hubbard T."/>
            <person name="Wooster R."/>
            <person name="Dunham I."/>
            <person name="Carter N.P."/>
            <person name="McVean G."/>
            <person name="Ross M.T."/>
            <person name="Harrow J."/>
            <person name="Olson M.V."/>
            <person name="Beck S."/>
            <person name="Rogers J."/>
            <person name="Bentley D.R."/>
        </authorList>
    </citation>
    <scope>NUCLEOTIDE SEQUENCE [LARGE SCALE GENOMIC DNA]</scope>
</reference>
<reference key="3">
    <citation type="journal article" date="2002" name="Genomics">
        <title>DEFOG: a practical scheme for deciphering families of genes.</title>
        <authorList>
            <person name="Fuchs T."/>
            <person name="Malecova B."/>
            <person name="Linhart C."/>
            <person name="Sharan R."/>
            <person name="Khen M."/>
            <person name="Herwig R."/>
            <person name="Shmulevich D."/>
            <person name="Elkon R."/>
            <person name="Steinfath M."/>
            <person name="O'Brien J.K."/>
            <person name="Radelof U."/>
            <person name="Lehrach H."/>
            <person name="Lancet D."/>
            <person name="Shamir R."/>
        </authorList>
    </citation>
    <scope>NUCLEOTIDE SEQUENCE [GENOMIC DNA] OF 68-283</scope>
</reference>
<reference key="4">
    <citation type="journal article" date="1997" name="Genomics">
        <title>Specific repertoire of olfactory receptor genes in the male germ cells of several mammalian species.</title>
        <authorList>
            <person name="Vanderhaeghen P."/>
            <person name="Schurmans S."/>
            <person name="Vassart G."/>
            <person name="Parmentier M."/>
        </authorList>
    </citation>
    <scope>NUCLEOTIDE SEQUENCE [MRNA] OF 126-282</scope>
    <source>
        <tissue>Testis</tissue>
    </source>
</reference>
<reference key="5">
    <citation type="journal article" date="1992" name="Nature">
        <title>Expression of members of the putative olfactory receptor gene family in mammalian germ cells.</title>
        <authorList>
            <person name="Parmentier M."/>
            <person name="Libert F."/>
            <person name="Schurmans S."/>
            <person name="Schiffmann S."/>
            <person name="Lefort A."/>
            <person name="Eggerickx D."/>
            <person name="Ledent C."/>
            <person name="Mollereau C."/>
            <person name="Gerard C."/>
            <person name="Perret J."/>
            <person name="Grootegoed A."/>
            <person name="Vassart G."/>
        </authorList>
    </citation>
    <scope>NUCLEOTIDE SEQUENCE [MRNA] OF 126-239</scope>
    <source>
        <tissue>Testis</tissue>
    </source>
</reference>
<reference key="6">
    <citation type="journal article" date="2004" name="Proc. Natl. Acad. Sci. U.S.A.">
        <title>The human olfactory receptor gene family.</title>
        <authorList>
            <person name="Malnic B."/>
            <person name="Godfrey P.A."/>
            <person name="Buck L.B."/>
        </authorList>
    </citation>
    <scope>IDENTIFICATION</scope>
</reference>
<reference key="7">
    <citation type="journal article" date="2004" name="Proc. Natl. Acad. Sci. U.S.A.">
        <authorList>
            <person name="Malnic B."/>
            <person name="Godfrey P.A."/>
            <person name="Buck L.B."/>
        </authorList>
    </citation>
    <scope>ERRATUM OF PUBMED:14983052</scope>
</reference>